<gene>
    <name evidence="1" type="primary">nadD</name>
    <name type="ordered locus">SAV1594</name>
</gene>
<name>NADD_STAAM</name>
<proteinExistence type="inferred from homology"/>
<accession>P65501</accession>
<accession>Q99TQ5</accession>
<dbReference type="EC" id="2.7.7.18" evidence="1"/>
<dbReference type="EMBL" id="BA000017">
    <property type="protein sequence ID" value="BAB57756.1"/>
    <property type="molecule type" value="Genomic_DNA"/>
</dbReference>
<dbReference type="RefSeq" id="WP_000725167.1">
    <property type="nucleotide sequence ID" value="NC_002758.2"/>
</dbReference>
<dbReference type="SMR" id="P65501"/>
<dbReference type="KEGG" id="sav:SAV1594"/>
<dbReference type="HOGENOM" id="CLU_069765_3_1_9"/>
<dbReference type="PhylomeDB" id="P65501"/>
<dbReference type="UniPathway" id="UPA00253">
    <property type="reaction ID" value="UER00332"/>
</dbReference>
<dbReference type="Proteomes" id="UP000002481">
    <property type="component" value="Chromosome"/>
</dbReference>
<dbReference type="GO" id="GO:0005524">
    <property type="term" value="F:ATP binding"/>
    <property type="evidence" value="ECO:0007669"/>
    <property type="project" value="UniProtKB-KW"/>
</dbReference>
<dbReference type="GO" id="GO:0004515">
    <property type="term" value="F:nicotinate-nucleotide adenylyltransferase activity"/>
    <property type="evidence" value="ECO:0007669"/>
    <property type="project" value="UniProtKB-UniRule"/>
</dbReference>
<dbReference type="GO" id="GO:0009435">
    <property type="term" value="P:NAD biosynthetic process"/>
    <property type="evidence" value="ECO:0007669"/>
    <property type="project" value="UniProtKB-UniRule"/>
</dbReference>
<dbReference type="CDD" id="cd02165">
    <property type="entry name" value="NMNAT"/>
    <property type="match status" value="1"/>
</dbReference>
<dbReference type="FunFam" id="3.40.50.620:FF:000189">
    <property type="entry name" value="Probable nicotinate-nucleotide adenylyltransferase"/>
    <property type="match status" value="1"/>
</dbReference>
<dbReference type="Gene3D" id="3.40.50.620">
    <property type="entry name" value="HUPs"/>
    <property type="match status" value="1"/>
</dbReference>
<dbReference type="HAMAP" id="MF_00244">
    <property type="entry name" value="NaMN_adenylyltr"/>
    <property type="match status" value="1"/>
</dbReference>
<dbReference type="InterPro" id="IPR004821">
    <property type="entry name" value="Cyt_trans-like"/>
</dbReference>
<dbReference type="InterPro" id="IPR005248">
    <property type="entry name" value="NadD/NMNAT"/>
</dbReference>
<dbReference type="InterPro" id="IPR014729">
    <property type="entry name" value="Rossmann-like_a/b/a_fold"/>
</dbReference>
<dbReference type="NCBIfam" id="TIGR00482">
    <property type="entry name" value="nicotinate (nicotinamide) nucleotide adenylyltransferase"/>
    <property type="match status" value="1"/>
</dbReference>
<dbReference type="NCBIfam" id="NF000840">
    <property type="entry name" value="PRK00071.1-3"/>
    <property type="match status" value="1"/>
</dbReference>
<dbReference type="NCBIfam" id="NF000841">
    <property type="entry name" value="PRK00071.1-4"/>
    <property type="match status" value="1"/>
</dbReference>
<dbReference type="PANTHER" id="PTHR39321">
    <property type="entry name" value="NICOTINATE-NUCLEOTIDE ADENYLYLTRANSFERASE-RELATED"/>
    <property type="match status" value="1"/>
</dbReference>
<dbReference type="PANTHER" id="PTHR39321:SF3">
    <property type="entry name" value="PHOSPHOPANTETHEINE ADENYLYLTRANSFERASE"/>
    <property type="match status" value="1"/>
</dbReference>
<dbReference type="Pfam" id="PF01467">
    <property type="entry name" value="CTP_transf_like"/>
    <property type="match status" value="1"/>
</dbReference>
<dbReference type="SUPFAM" id="SSF52374">
    <property type="entry name" value="Nucleotidylyl transferase"/>
    <property type="match status" value="1"/>
</dbReference>
<evidence type="ECO:0000255" key="1">
    <source>
        <dbReference type="HAMAP-Rule" id="MF_00244"/>
    </source>
</evidence>
<sequence>MKKIVLYGGQFNPIHTAHMIVASEVFHELQPDEFYFLPSFMSPLKKHNNFIDVQHRLTMIQMIIDELGFGDICDDEIKRGGQSYTYDTIKAFKEQHKDSELYFVIGTDQYNQLEKWYQIEYLKEMVTFVVVNRDKNSQNVENAMIAIQIPRVDISSTMIRQRVSEGKSIQVLVPKSVENYIKGEGLYEH</sequence>
<comment type="function">
    <text evidence="1">Catalyzes the reversible adenylation of nicotinate mononucleotide (NaMN) to nicotinic acid adenine dinucleotide (NaAD).</text>
</comment>
<comment type="catalytic activity">
    <reaction evidence="1">
        <text>nicotinate beta-D-ribonucleotide + ATP + H(+) = deamido-NAD(+) + diphosphate</text>
        <dbReference type="Rhea" id="RHEA:22860"/>
        <dbReference type="ChEBI" id="CHEBI:15378"/>
        <dbReference type="ChEBI" id="CHEBI:30616"/>
        <dbReference type="ChEBI" id="CHEBI:33019"/>
        <dbReference type="ChEBI" id="CHEBI:57502"/>
        <dbReference type="ChEBI" id="CHEBI:58437"/>
        <dbReference type="EC" id="2.7.7.18"/>
    </reaction>
</comment>
<comment type="pathway">
    <text evidence="1">Cofactor biosynthesis; NAD(+) biosynthesis; deamido-NAD(+) from nicotinate D-ribonucleotide: step 1/1.</text>
</comment>
<comment type="similarity">
    <text evidence="1">Belongs to the NadD family.</text>
</comment>
<keyword id="KW-0067">ATP-binding</keyword>
<keyword id="KW-0520">NAD</keyword>
<keyword id="KW-0547">Nucleotide-binding</keyword>
<keyword id="KW-0548">Nucleotidyltransferase</keyword>
<keyword id="KW-0662">Pyridine nucleotide biosynthesis</keyword>
<keyword id="KW-0808">Transferase</keyword>
<reference key="1">
    <citation type="journal article" date="2001" name="Lancet">
        <title>Whole genome sequencing of meticillin-resistant Staphylococcus aureus.</title>
        <authorList>
            <person name="Kuroda M."/>
            <person name="Ohta T."/>
            <person name="Uchiyama I."/>
            <person name="Baba T."/>
            <person name="Yuzawa H."/>
            <person name="Kobayashi I."/>
            <person name="Cui L."/>
            <person name="Oguchi A."/>
            <person name="Aoki K."/>
            <person name="Nagai Y."/>
            <person name="Lian J.-Q."/>
            <person name="Ito T."/>
            <person name="Kanamori M."/>
            <person name="Matsumaru H."/>
            <person name="Maruyama A."/>
            <person name="Murakami H."/>
            <person name="Hosoyama A."/>
            <person name="Mizutani-Ui Y."/>
            <person name="Takahashi N.K."/>
            <person name="Sawano T."/>
            <person name="Inoue R."/>
            <person name="Kaito C."/>
            <person name="Sekimizu K."/>
            <person name="Hirakawa H."/>
            <person name="Kuhara S."/>
            <person name="Goto S."/>
            <person name="Yabuzaki J."/>
            <person name="Kanehisa M."/>
            <person name="Yamashita A."/>
            <person name="Oshima K."/>
            <person name="Furuya K."/>
            <person name="Yoshino C."/>
            <person name="Shiba T."/>
            <person name="Hattori M."/>
            <person name="Ogasawara N."/>
            <person name="Hayashi H."/>
            <person name="Hiramatsu K."/>
        </authorList>
    </citation>
    <scope>NUCLEOTIDE SEQUENCE [LARGE SCALE GENOMIC DNA]</scope>
    <source>
        <strain>Mu50 / ATCC 700699</strain>
    </source>
</reference>
<organism>
    <name type="scientific">Staphylococcus aureus (strain Mu50 / ATCC 700699)</name>
    <dbReference type="NCBI Taxonomy" id="158878"/>
    <lineage>
        <taxon>Bacteria</taxon>
        <taxon>Bacillati</taxon>
        <taxon>Bacillota</taxon>
        <taxon>Bacilli</taxon>
        <taxon>Bacillales</taxon>
        <taxon>Staphylococcaceae</taxon>
        <taxon>Staphylococcus</taxon>
    </lineage>
</organism>
<feature type="chain" id="PRO_0000181444" description="Probable nicotinate-nucleotide adenylyltransferase">
    <location>
        <begin position="1"/>
        <end position="189"/>
    </location>
</feature>
<protein>
    <recommendedName>
        <fullName evidence="1">Probable nicotinate-nucleotide adenylyltransferase</fullName>
        <ecNumber evidence="1">2.7.7.18</ecNumber>
    </recommendedName>
    <alternativeName>
        <fullName evidence="1">Deamido-NAD(+) diphosphorylase</fullName>
    </alternativeName>
    <alternativeName>
        <fullName evidence="1">Deamido-NAD(+) pyrophosphorylase</fullName>
    </alternativeName>
    <alternativeName>
        <fullName evidence="1">Nicotinate mononucleotide adenylyltransferase</fullName>
        <shortName evidence="1">NaMN adenylyltransferase</shortName>
    </alternativeName>
</protein>